<comment type="function">
    <text evidence="3">Binds to actin filaments in muscle and non-muscle cells. Plays a central role, in association with the troponin complex, in the calcium dependent regulation of vertebrate striated muscle contraction. Smooth muscle contraction is regulated by interaction with caldesmon. In non-muscle cells is implicated in stabilizing cytoskeleton actin filaments.</text>
</comment>
<comment type="subunit">
    <text evidence="2">Homodimer. Heterodimer of an alpha (TPM1, TPM3 or TPM4) and a beta (TPM2) chain.</text>
</comment>
<comment type="subcellular location">
    <subcellularLocation>
        <location evidence="2">Cytoplasm</location>
        <location evidence="2">Cytoskeleton</location>
    </subcellularLocation>
    <text evidence="2">Associates with F-actin stress fibers.</text>
</comment>
<comment type="domain">
    <text>The molecule is in a coiled coil structure that is formed by 2 polypeptide chains. The sequence exhibits a prominent seven-residues periodicity.</text>
</comment>
<comment type="similarity">
    <text evidence="5">Belongs to the tropomyosin family.</text>
</comment>
<keyword id="KW-0009">Actin-binding</keyword>
<keyword id="KW-0175">Coiled coil</keyword>
<keyword id="KW-0963">Cytoplasm</keyword>
<keyword id="KW-0206">Cytoskeleton</keyword>
<keyword id="KW-0514">Muscle protein</keyword>
<organism>
    <name type="scientific">Rana temporaria</name>
    <name type="common">European common frog</name>
    <dbReference type="NCBI Taxonomy" id="8407"/>
    <lineage>
        <taxon>Eukaryota</taxon>
        <taxon>Metazoa</taxon>
        <taxon>Chordata</taxon>
        <taxon>Craniata</taxon>
        <taxon>Vertebrata</taxon>
        <taxon>Euteleostomi</taxon>
        <taxon>Amphibia</taxon>
        <taxon>Batrachia</taxon>
        <taxon>Anura</taxon>
        <taxon>Neobatrachia</taxon>
        <taxon>Ranoidea</taxon>
        <taxon>Ranidae</taxon>
        <taxon>Rana</taxon>
        <taxon>Rana</taxon>
    </lineage>
</organism>
<gene>
    <name type="primary">tpm1</name>
</gene>
<proteinExistence type="evidence at transcript level"/>
<feature type="chain" id="PRO_0000205641" description="Tropomyosin alpha-1 chain">
    <location>
        <begin position="1"/>
        <end position="284"/>
    </location>
</feature>
<feature type="region of interest" description="Disordered" evidence="4">
    <location>
        <begin position="1"/>
        <end position="40"/>
    </location>
</feature>
<feature type="coiled-coil region" evidence="1">
    <location>
        <begin position="1"/>
        <end position="284"/>
    </location>
</feature>
<feature type="compositionally biased region" description="Basic and acidic residues" evidence="4">
    <location>
        <begin position="12"/>
        <end position="40"/>
    </location>
</feature>
<reference key="1">
    <citation type="journal article" date="1989" name="Proc. Natl. Acad. Sci. U.S.A.">
        <title>One-sided polymerase chain reaction: the amplification of cDNA.</title>
        <authorList>
            <person name="Ohara O."/>
            <person name="Dorit R.L."/>
            <person name="Gilbert W."/>
        </authorList>
    </citation>
    <scope>NUCLEOTIDE SEQUENCE [MRNA]</scope>
</reference>
<name>TPM1_RANTE</name>
<accession>P13105</accession>
<evidence type="ECO:0000250" key="1"/>
<evidence type="ECO:0000250" key="2">
    <source>
        <dbReference type="UniProtKB" id="P04692"/>
    </source>
</evidence>
<evidence type="ECO:0000250" key="3">
    <source>
        <dbReference type="UniProtKB" id="P09493"/>
    </source>
</evidence>
<evidence type="ECO:0000256" key="4">
    <source>
        <dbReference type="SAM" id="MobiDB-lite"/>
    </source>
</evidence>
<evidence type="ECO:0000305" key="5"/>
<sequence>MDAIKKKMQMLKLDKENALDRAEQAEADKKGAEDKSKQLEDELVAMQKKMKGTEDELDKYSEALKDAQEKLELAEKKATDAEADVASLNRRIQLVEEELDRAQERLATALQKLEEAEKAADESERGMKVIENRALKDEEKIELQEIQLKEAKHIAEEADRKYEEVARKLVIIEGDLERAEERAELSESKCAELEEELKTVTNNLKSLEAQAEKYSQKEDKYEEEIKVLTDKLKEAETRAEFAERTVAKLEKSIDDLEDELYAQKLKYKAISEELDHALNDMTSI</sequence>
<protein>
    <recommendedName>
        <fullName>Tropomyosin alpha-1 chain</fullName>
    </recommendedName>
    <alternativeName>
        <fullName>Alpha-tropomyosin</fullName>
    </alternativeName>
    <alternativeName>
        <fullName>Tropomyosin-1</fullName>
    </alternativeName>
</protein>
<dbReference type="EMBL" id="M24634">
    <property type="protein sequence ID" value="AAA18096.1"/>
    <property type="molecule type" value="mRNA"/>
</dbReference>
<dbReference type="BMRB" id="P13105"/>
<dbReference type="SMR" id="P13105"/>
<dbReference type="GO" id="GO:0015629">
    <property type="term" value="C:actin cytoskeleton"/>
    <property type="evidence" value="ECO:0000250"/>
    <property type="project" value="UniProtKB"/>
</dbReference>
<dbReference type="GO" id="GO:0005737">
    <property type="term" value="C:cytoplasm"/>
    <property type="evidence" value="ECO:0007669"/>
    <property type="project" value="UniProtKB-KW"/>
</dbReference>
<dbReference type="GO" id="GO:0051015">
    <property type="term" value="F:actin filament binding"/>
    <property type="evidence" value="ECO:0000250"/>
    <property type="project" value="UniProtKB"/>
</dbReference>
<dbReference type="GO" id="GO:0042802">
    <property type="term" value="F:identical protein binding"/>
    <property type="evidence" value="ECO:0000250"/>
    <property type="project" value="UniProtKB"/>
</dbReference>
<dbReference type="GO" id="GO:0046982">
    <property type="term" value="F:protein heterodimerization activity"/>
    <property type="evidence" value="ECO:0000250"/>
    <property type="project" value="UniProtKB"/>
</dbReference>
<dbReference type="GO" id="GO:0042803">
    <property type="term" value="F:protein homodimerization activity"/>
    <property type="evidence" value="ECO:0000250"/>
    <property type="project" value="UniProtKB"/>
</dbReference>
<dbReference type="FunFam" id="1.20.5.170:FF:000005">
    <property type="entry name" value="Tropomyosin alpha-1 chain"/>
    <property type="match status" value="1"/>
</dbReference>
<dbReference type="FunFam" id="1.20.5.170:FF:000001">
    <property type="entry name" value="Tropomyosin alpha-1 chain isoform 1"/>
    <property type="match status" value="1"/>
</dbReference>
<dbReference type="FunFam" id="1.20.5.340:FF:000001">
    <property type="entry name" value="Tropomyosin alpha-1 chain isoform 2"/>
    <property type="match status" value="1"/>
</dbReference>
<dbReference type="Gene3D" id="1.20.5.170">
    <property type="match status" value="2"/>
</dbReference>
<dbReference type="Gene3D" id="1.20.5.340">
    <property type="match status" value="1"/>
</dbReference>
<dbReference type="InterPro" id="IPR000533">
    <property type="entry name" value="Tropomyosin"/>
</dbReference>
<dbReference type="PANTHER" id="PTHR19269">
    <property type="entry name" value="TROPOMYOSIN"/>
    <property type="match status" value="1"/>
</dbReference>
<dbReference type="Pfam" id="PF00261">
    <property type="entry name" value="Tropomyosin"/>
    <property type="match status" value="1"/>
</dbReference>
<dbReference type="PRINTS" id="PR00194">
    <property type="entry name" value="TROPOMYOSIN"/>
</dbReference>
<dbReference type="SUPFAM" id="SSF57997">
    <property type="entry name" value="Tropomyosin"/>
    <property type="match status" value="1"/>
</dbReference>
<dbReference type="PROSITE" id="PS00326">
    <property type="entry name" value="TROPOMYOSIN"/>
    <property type="match status" value="1"/>
</dbReference>